<keyword id="KW-0963">Cytoplasm</keyword>
<keyword id="KW-0408">Iron</keyword>
<keyword id="KW-0411">Iron-sulfur</keyword>
<keyword id="KW-0479">Metal-binding</keyword>
<keyword id="KW-1185">Reference proteome</keyword>
<proteinExistence type="inferred from homology"/>
<evidence type="ECO:0000250" key="1">
    <source>
        <dbReference type="UniProtKB" id="P32461"/>
    </source>
</evidence>
<evidence type="ECO:0000256" key="2">
    <source>
        <dbReference type="SAM" id="MobiDB-lite"/>
    </source>
</evidence>
<evidence type="ECO:0000305" key="3"/>
<comment type="function">
    <text evidence="1">Required for the first step of diphthamide biosynthesis, a post-translational modification of histidine which occurs in elongation factor 2. DPH1 and DPH2 transfer a 3-amino-3-carboxypropyl (ACP) group from S-adenosyl-L-methionine (SAM) to a histidine residue, the reaction is assisted by a reduction system comprising DPH3 and a NADH-dependent reductase, predominantly CBR1 (By similarity). Facilitates the reduction of the catalytic iron-sulfur cluster found in the DPH1 subunit (By similarity).</text>
</comment>
<comment type="cofactor">
    <cofactor evidence="1">
        <name>[4Fe-4S] cluster</name>
        <dbReference type="ChEBI" id="CHEBI:49883"/>
    </cofactor>
    <text evidence="1">Binds 1 [4Fe-4S] cluster per subunit. The cluster facilitates the reduction of the catalytic iron-sulfur cluster in the DPH1 subunit.</text>
</comment>
<comment type="pathway">
    <text evidence="1">Protein modification; peptidyl-diphthamide biosynthesis.</text>
</comment>
<comment type="subunit">
    <text evidence="1">Component of the 2-(3-amino-3-carboxypropyl)histidine synthase complex composed of DPH1, DPH2, DPH3 and a NADH-dependent reductase, predominantly CBR1.</text>
</comment>
<comment type="subcellular location">
    <subcellularLocation>
        <location evidence="1">Cytoplasm</location>
    </subcellularLocation>
</comment>
<comment type="similarity">
    <text evidence="3">Belongs to the DPH1/DPH2 family. DPH2 subfamily.</text>
</comment>
<feature type="chain" id="PRO_0000083386" description="2-(3-amino-3-carboxypropyl)histidine synthase subunit 2">
    <location>
        <begin position="1"/>
        <end position="515"/>
    </location>
</feature>
<feature type="region of interest" description="Disordered" evidence="2">
    <location>
        <begin position="493"/>
        <end position="515"/>
    </location>
</feature>
<feature type="binding site" evidence="1">
    <location>
        <position position="104"/>
    </location>
    <ligand>
        <name>[4Fe-4S] cluster</name>
        <dbReference type="ChEBI" id="CHEBI:49883"/>
    </ligand>
</feature>
<feature type="binding site" evidence="1">
    <location>
        <position position="125"/>
    </location>
    <ligand>
        <name>[4Fe-4S] cluster</name>
        <dbReference type="ChEBI" id="CHEBI:49883"/>
    </ligand>
</feature>
<feature type="binding site" evidence="1">
    <location>
        <position position="353"/>
    </location>
    <ligand>
        <name>[4Fe-4S] cluster</name>
        <dbReference type="ChEBI" id="CHEBI:49883"/>
    </ligand>
</feature>
<gene>
    <name type="primary">DPH2</name>
    <name type="ordered locus">CNM02230</name>
</gene>
<accession>P0CN20</accession>
<accession>Q55I10</accession>
<accession>Q5K7J4</accession>
<dbReference type="EMBL" id="AE017353">
    <property type="protein sequence ID" value="AAW46752.1"/>
    <property type="molecule type" value="Genomic_DNA"/>
</dbReference>
<dbReference type="RefSeq" id="XP_568269.1">
    <property type="nucleotide sequence ID" value="XM_568269.1"/>
</dbReference>
<dbReference type="SMR" id="P0CN20"/>
<dbReference type="FunCoup" id="P0CN20">
    <property type="interactions" value="696"/>
</dbReference>
<dbReference type="STRING" id="214684.P0CN20"/>
<dbReference type="PaxDb" id="214684-P0CN20"/>
<dbReference type="EnsemblFungi" id="AAW46752">
    <property type="protein sequence ID" value="AAW46752"/>
    <property type="gene ID" value="CNM02230"/>
</dbReference>
<dbReference type="GeneID" id="3255244"/>
<dbReference type="KEGG" id="cne:CNM02230"/>
<dbReference type="VEuPathDB" id="FungiDB:CNM02230"/>
<dbReference type="eggNOG" id="KOG2648">
    <property type="taxonomic scope" value="Eukaryota"/>
</dbReference>
<dbReference type="HOGENOM" id="CLU_015210_1_0_1"/>
<dbReference type="InParanoid" id="P0CN20"/>
<dbReference type="OMA" id="QIWNENH"/>
<dbReference type="OrthoDB" id="449241at2759"/>
<dbReference type="UniPathway" id="UPA00559"/>
<dbReference type="Proteomes" id="UP000002149">
    <property type="component" value="Chromosome 13"/>
</dbReference>
<dbReference type="GO" id="GO:0120513">
    <property type="term" value="C:2-(3-amino-3-carboxypropyl)histidine synthase complex"/>
    <property type="evidence" value="ECO:0000250"/>
    <property type="project" value="UniProtKB"/>
</dbReference>
<dbReference type="GO" id="GO:0005737">
    <property type="term" value="C:cytoplasm"/>
    <property type="evidence" value="ECO:0007669"/>
    <property type="project" value="UniProtKB-SubCell"/>
</dbReference>
<dbReference type="GO" id="GO:0090560">
    <property type="term" value="F:2-(3-amino-3-carboxypropyl)histidine synthase activity"/>
    <property type="evidence" value="ECO:0007669"/>
    <property type="project" value="UniProtKB-EC"/>
</dbReference>
<dbReference type="GO" id="GO:0051539">
    <property type="term" value="F:4 iron, 4 sulfur cluster binding"/>
    <property type="evidence" value="ECO:0000250"/>
    <property type="project" value="UniProtKB"/>
</dbReference>
<dbReference type="GO" id="GO:0046872">
    <property type="term" value="F:metal ion binding"/>
    <property type="evidence" value="ECO:0007669"/>
    <property type="project" value="UniProtKB-KW"/>
</dbReference>
<dbReference type="GO" id="GO:0017183">
    <property type="term" value="P:protein histidyl modification to diphthamide"/>
    <property type="evidence" value="ECO:0000250"/>
    <property type="project" value="UniProtKB"/>
</dbReference>
<dbReference type="FunFam" id="3.40.50.11840:FF:000005">
    <property type="entry name" value="2-(3-amino-3-carboxypropyl)histidine synthase subunit 2"/>
    <property type="match status" value="1"/>
</dbReference>
<dbReference type="FunFam" id="3.40.50.11860:FF:000001">
    <property type="entry name" value="2-(3-amino-3-carboxypropyl)histidine synthase subunit 2"/>
    <property type="match status" value="1"/>
</dbReference>
<dbReference type="Gene3D" id="3.40.50.11840">
    <property type="entry name" value="Diphthamide synthesis DPH1/DPH2 domain 1"/>
    <property type="match status" value="1"/>
</dbReference>
<dbReference type="Gene3D" id="3.40.50.11860">
    <property type="entry name" value="Diphthamide synthesis DPH1/DPH2 domain 3"/>
    <property type="match status" value="1"/>
</dbReference>
<dbReference type="InterPro" id="IPR010014">
    <property type="entry name" value="DHP2"/>
</dbReference>
<dbReference type="InterPro" id="IPR016435">
    <property type="entry name" value="DPH1/DPH2"/>
</dbReference>
<dbReference type="InterPro" id="IPR042263">
    <property type="entry name" value="DPH1/DPH2_1"/>
</dbReference>
<dbReference type="InterPro" id="IPR042265">
    <property type="entry name" value="DPH1/DPH2_3"/>
</dbReference>
<dbReference type="NCBIfam" id="TIGR00322">
    <property type="entry name" value="diphth2_R"/>
    <property type="match status" value="1"/>
</dbReference>
<dbReference type="NCBIfam" id="TIGR00272">
    <property type="entry name" value="DPH2"/>
    <property type="match status" value="1"/>
</dbReference>
<dbReference type="PANTHER" id="PTHR10762:SF2">
    <property type="entry name" value="2-(3-AMINO-3-CARBOXYPROPYL)HISTIDINE SYNTHASE SUBUNIT 2"/>
    <property type="match status" value="1"/>
</dbReference>
<dbReference type="PANTHER" id="PTHR10762">
    <property type="entry name" value="DIPHTHAMIDE BIOSYNTHESIS PROTEIN"/>
    <property type="match status" value="1"/>
</dbReference>
<dbReference type="Pfam" id="PF01866">
    <property type="entry name" value="Diphthamide_syn"/>
    <property type="match status" value="1"/>
</dbReference>
<dbReference type="SFLD" id="SFLDG01121">
    <property type="entry name" value="Diphthamide_biosynthesis"/>
    <property type="match status" value="1"/>
</dbReference>
<dbReference type="SFLD" id="SFLDF00408">
    <property type="entry name" value="Diphthamide_biosynthesis_famil"/>
    <property type="match status" value="1"/>
</dbReference>
<dbReference type="SFLD" id="SFLDS00032">
    <property type="entry name" value="Radical_SAM_3-amino-3-carboxyp"/>
    <property type="match status" value="1"/>
</dbReference>
<reference key="1">
    <citation type="journal article" date="2005" name="Science">
        <title>The genome of the basidiomycetous yeast and human pathogen Cryptococcus neoformans.</title>
        <authorList>
            <person name="Loftus B.J."/>
            <person name="Fung E."/>
            <person name="Roncaglia P."/>
            <person name="Rowley D."/>
            <person name="Amedeo P."/>
            <person name="Bruno D."/>
            <person name="Vamathevan J."/>
            <person name="Miranda M."/>
            <person name="Anderson I.J."/>
            <person name="Fraser J.A."/>
            <person name="Allen J.E."/>
            <person name="Bosdet I.E."/>
            <person name="Brent M.R."/>
            <person name="Chiu R."/>
            <person name="Doering T.L."/>
            <person name="Donlin M.J."/>
            <person name="D'Souza C.A."/>
            <person name="Fox D.S."/>
            <person name="Grinberg V."/>
            <person name="Fu J."/>
            <person name="Fukushima M."/>
            <person name="Haas B.J."/>
            <person name="Huang J.C."/>
            <person name="Janbon G."/>
            <person name="Jones S.J.M."/>
            <person name="Koo H.L."/>
            <person name="Krzywinski M.I."/>
            <person name="Kwon-Chung K.J."/>
            <person name="Lengeler K.B."/>
            <person name="Maiti R."/>
            <person name="Marra M.A."/>
            <person name="Marra R.E."/>
            <person name="Mathewson C.A."/>
            <person name="Mitchell T.G."/>
            <person name="Pertea M."/>
            <person name="Riggs F.R."/>
            <person name="Salzberg S.L."/>
            <person name="Schein J.E."/>
            <person name="Shvartsbeyn A."/>
            <person name="Shin H."/>
            <person name="Shumway M."/>
            <person name="Specht C.A."/>
            <person name="Suh B.B."/>
            <person name="Tenney A."/>
            <person name="Utterback T.R."/>
            <person name="Wickes B.L."/>
            <person name="Wortman J.R."/>
            <person name="Wye N.H."/>
            <person name="Kronstad J.W."/>
            <person name="Lodge J.K."/>
            <person name="Heitman J."/>
            <person name="Davis R.W."/>
            <person name="Fraser C.M."/>
            <person name="Hyman R.W."/>
        </authorList>
    </citation>
    <scope>NUCLEOTIDE SEQUENCE [LARGE SCALE GENOMIC DNA]</scope>
    <source>
        <strain>JEC21 / ATCC MYA-565</strain>
    </source>
</reference>
<name>DPH2_CRYNJ</name>
<organism>
    <name type="scientific">Cryptococcus neoformans var. neoformans serotype D (strain JEC21 / ATCC MYA-565)</name>
    <name type="common">Filobasidiella neoformans</name>
    <dbReference type="NCBI Taxonomy" id="214684"/>
    <lineage>
        <taxon>Eukaryota</taxon>
        <taxon>Fungi</taxon>
        <taxon>Dikarya</taxon>
        <taxon>Basidiomycota</taxon>
        <taxon>Agaricomycotina</taxon>
        <taxon>Tremellomycetes</taxon>
        <taxon>Tremellales</taxon>
        <taxon>Cryptococcaceae</taxon>
        <taxon>Cryptococcus</taxon>
        <taxon>Cryptococcus neoformans species complex</taxon>
    </lineage>
</organism>
<sequence length="515" mass="56464">MSDAFSTPADHALSHPELEAILENAQAGPSSIGDGAEGMSIEEAFEVDETVRRVLEGDYKTIGLQFPDELLPSSVSVYRAIQTRIAHTGAQAYVLADSTYGNCCPDVLSCLHLPADFLVHYGHACLTPTDALPVHYVFPRQKLDVKQAVESLLAASKNELDGDGRKGIVVVWDVSYDWLANDIRDTFSQDSTIQISFASIQKPTLASQKGLKDVKGKTPALRSVEPPQGLEMNDCVLWYIGEEGRSCMNLQMTHANNPLFIYSPSSQSVSPLHRTTSRLLSRRLFALHQALSADVFGLIVSNIGLASSKPLLAQLREDLKRAKKKSYTLSVGRLNPAKLANFAEIECFVLVGCAEGGVVDSKDFLRPIITPWELELALQGPDHVWAPENWTLDLGTVLKDAQEREIKIKQDSSTADSDDDSLEFSLITGTMRTKKRFAFGNGTHTLENNKLLGDGGVQDLTLRNQNFSLSKLESAGSTFLASREFQGLEPRYGMDEPSVLEQGRSGVARGYTEEK</sequence>
<protein>
    <recommendedName>
        <fullName evidence="3">2-(3-amino-3-carboxypropyl)histidine synthase subunit 2</fullName>
    </recommendedName>
    <alternativeName>
        <fullName>Diphthamide biosynthesis protein 2</fullName>
    </alternativeName>
    <alternativeName>
        <fullName evidence="3">Diphtheria toxin resistance protein 2</fullName>
    </alternativeName>
    <alternativeName>
        <fullName evidence="3">S-adenosyl-L-methionine:L-histidine 3-amino-3-carboxypropyltransferase 2</fullName>
    </alternativeName>
</protein>